<organism>
    <name type="scientific">Candida albicans (strain SC5314 / ATCC MYA-2876)</name>
    <name type="common">Yeast</name>
    <dbReference type="NCBI Taxonomy" id="237561"/>
    <lineage>
        <taxon>Eukaryota</taxon>
        <taxon>Fungi</taxon>
        <taxon>Dikarya</taxon>
        <taxon>Ascomycota</taxon>
        <taxon>Saccharomycotina</taxon>
        <taxon>Pichiomycetes</taxon>
        <taxon>Debaryomycetaceae</taxon>
        <taxon>Candida/Lodderomyces clade</taxon>
        <taxon>Candida</taxon>
    </lineage>
</organism>
<keyword id="KW-0963">Cytoplasm</keyword>
<keyword id="KW-0903">Direct protein sequencing</keyword>
<keyword id="KW-0312">Gluconeogenesis</keyword>
<keyword id="KW-0324">Glycolysis</keyword>
<keyword id="KW-0413">Isomerase</keyword>
<keyword id="KW-1185">Reference proteome</keyword>
<feature type="chain" id="PRO_0000180572" description="Glucose-6-phosphate isomerase">
    <location>
        <begin position="1"/>
        <end position="550"/>
    </location>
</feature>
<feature type="active site" description="Proton donor" evidence="1">
    <location>
        <position position="362"/>
    </location>
</feature>
<feature type="active site" evidence="1">
    <location>
        <position position="393"/>
    </location>
</feature>
<feature type="active site" evidence="1">
    <location>
        <position position="515"/>
    </location>
</feature>
<feature type="binding site" evidence="2">
    <location>
        <begin position="163"/>
        <end position="164"/>
    </location>
    <ligand>
        <name>D-glucose 6-phosphate</name>
        <dbReference type="ChEBI" id="CHEBI:61548"/>
    </ligand>
</feature>
<feature type="binding site" evidence="2">
    <location>
        <begin position="214"/>
        <end position="219"/>
    </location>
    <ligand>
        <name>D-glucose 6-phosphate</name>
        <dbReference type="ChEBI" id="CHEBI:61548"/>
    </ligand>
</feature>
<feature type="binding site" evidence="2">
    <location>
        <position position="358"/>
    </location>
    <ligand>
        <name>D-glucose 6-phosphate</name>
        <dbReference type="ChEBI" id="CHEBI:61548"/>
    </ligand>
</feature>
<feature type="binding site" evidence="2">
    <location>
        <position position="362"/>
    </location>
    <ligand>
        <name>D-glucose 6-phosphate</name>
        <dbReference type="ChEBI" id="CHEBI:61548"/>
    </ligand>
</feature>
<feature type="binding site" evidence="2">
    <location>
        <position position="393"/>
    </location>
    <ligand>
        <name>D-glucose 6-phosphate</name>
        <dbReference type="ChEBI" id="CHEBI:61548"/>
    </ligand>
</feature>
<feature type="binding site" evidence="2">
    <location>
        <position position="515"/>
    </location>
    <ligand>
        <name>D-glucose 6-phosphate</name>
        <dbReference type="ChEBI" id="CHEBI:61548"/>
    </ligand>
</feature>
<gene>
    <name type="primary">PGI1</name>
    <name type="ordered locus">CAALFM_CR06340CA</name>
    <name type="ORF">CaO19.11369</name>
    <name type="ORF">CaO19.3888</name>
</gene>
<proteinExistence type="evidence at protein level"/>
<dbReference type="EC" id="5.3.1.9" evidence="1"/>
<dbReference type="EMBL" id="CP017630">
    <property type="protein sequence ID" value="AOW31339.1"/>
    <property type="molecule type" value="Genomic_DNA"/>
</dbReference>
<dbReference type="RefSeq" id="XP_713513.1">
    <property type="nucleotide sequence ID" value="XM_708420.1"/>
</dbReference>
<dbReference type="SMR" id="P83780"/>
<dbReference type="BioGRID" id="1227925">
    <property type="interactions" value="3"/>
</dbReference>
<dbReference type="FunCoup" id="P83780">
    <property type="interactions" value="1206"/>
</dbReference>
<dbReference type="STRING" id="237561.P83780"/>
<dbReference type="MoonProt" id="P83780"/>
<dbReference type="EnsemblFungi" id="CR_06340C_A-T">
    <property type="protein sequence ID" value="CR_06340C_A-T-p1"/>
    <property type="gene ID" value="CR_06340C_A"/>
</dbReference>
<dbReference type="GeneID" id="3644847"/>
<dbReference type="KEGG" id="cal:CAALFM_CR06340CA"/>
<dbReference type="CGD" id="CAL0000197690">
    <property type="gene designation" value="PGI1"/>
</dbReference>
<dbReference type="VEuPathDB" id="FungiDB:CR_06340C_A"/>
<dbReference type="eggNOG" id="KOG2446">
    <property type="taxonomic scope" value="Eukaryota"/>
</dbReference>
<dbReference type="HOGENOM" id="CLU_017947_3_1_1"/>
<dbReference type="InParanoid" id="P83780"/>
<dbReference type="OMA" id="DWYRQLW"/>
<dbReference type="OrthoDB" id="5831190at2759"/>
<dbReference type="UniPathway" id="UPA00109">
    <property type="reaction ID" value="UER00181"/>
</dbReference>
<dbReference type="PRO" id="PR:P83780"/>
<dbReference type="Proteomes" id="UP000000559">
    <property type="component" value="Chromosome R"/>
</dbReference>
<dbReference type="GO" id="GO:0005829">
    <property type="term" value="C:cytosol"/>
    <property type="evidence" value="ECO:0000318"/>
    <property type="project" value="GO_Central"/>
</dbReference>
<dbReference type="GO" id="GO:0062040">
    <property type="term" value="C:fungal biofilm matrix"/>
    <property type="evidence" value="ECO:0000314"/>
    <property type="project" value="CGD"/>
</dbReference>
<dbReference type="GO" id="GO:0005739">
    <property type="term" value="C:mitochondrion"/>
    <property type="evidence" value="ECO:0007669"/>
    <property type="project" value="EnsemblFungi"/>
</dbReference>
<dbReference type="GO" id="GO:0097367">
    <property type="term" value="F:carbohydrate derivative binding"/>
    <property type="evidence" value="ECO:0007669"/>
    <property type="project" value="InterPro"/>
</dbReference>
<dbReference type="GO" id="GO:0004347">
    <property type="term" value="F:glucose-6-phosphate isomerase activity"/>
    <property type="evidence" value="ECO:0000318"/>
    <property type="project" value="GO_Central"/>
</dbReference>
<dbReference type="GO" id="GO:0048029">
    <property type="term" value="F:monosaccharide binding"/>
    <property type="evidence" value="ECO:0000318"/>
    <property type="project" value="GO_Central"/>
</dbReference>
<dbReference type="GO" id="GO:0006094">
    <property type="term" value="P:gluconeogenesis"/>
    <property type="evidence" value="ECO:0000318"/>
    <property type="project" value="GO_Central"/>
</dbReference>
<dbReference type="GO" id="GO:0051156">
    <property type="term" value="P:glucose 6-phosphate metabolic process"/>
    <property type="evidence" value="ECO:0000318"/>
    <property type="project" value="GO_Central"/>
</dbReference>
<dbReference type="GO" id="GO:0006096">
    <property type="term" value="P:glycolytic process"/>
    <property type="evidence" value="ECO:0000318"/>
    <property type="project" value="GO_Central"/>
</dbReference>
<dbReference type="CDD" id="cd05015">
    <property type="entry name" value="SIS_PGI_1"/>
    <property type="match status" value="1"/>
</dbReference>
<dbReference type="CDD" id="cd05016">
    <property type="entry name" value="SIS_PGI_2"/>
    <property type="match status" value="1"/>
</dbReference>
<dbReference type="FunFam" id="1.10.1390.10:FF:000001">
    <property type="entry name" value="Glucose-6-phosphate isomerase"/>
    <property type="match status" value="1"/>
</dbReference>
<dbReference type="FunFam" id="3.40.50.10490:FF:000004">
    <property type="entry name" value="Glucose-6-phosphate isomerase"/>
    <property type="match status" value="1"/>
</dbReference>
<dbReference type="Gene3D" id="1.10.1390.10">
    <property type="match status" value="1"/>
</dbReference>
<dbReference type="Gene3D" id="3.40.50.10490">
    <property type="entry name" value="Glucose-6-phosphate isomerase like protein, domain 1"/>
    <property type="match status" value="2"/>
</dbReference>
<dbReference type="HAMAP" id="MF_00473">
    <property type="entry name" value="G6P_isomerase"/>
    <property type="match status" value="1"/>
</dbReference>
<dbReference type="InterPro" id="IPR001672">
    <property type="entry name" value="G6P_Isomerase"/>
</dbReference>
<dbReference type="InterPro" id="IPR023096">
    <property type="entry name" value="G6P_Isomerase_C"/>
</dbReference>
<dbReference type="InterPro" id="IPR018189">
    <property type="entry name" value="Phosphoglucose_isomerase_CS"/>
</dbReference>
<dbReference type="InterPro" id="IPR046348">
    <property type="entry name" value="SIS_dom_sf"/>
</dbReference>
<dbReference type="InterPro" id="IPR035476">
    <property type="entry name" value="SIS_PGI_1"/>
</dbReference>
<dbReference type="InterPro" id="IPR035482">
    <property type="entry name" value="SIS_PGI_2"/>
</dbReference>
<dbReference type="NCBIfam" id="NF001211">
    <property type="entry name" value="PRK00179.1"/>
    <property type="match status" value="1"/>
</dbReference>
<dbReference type="PANTHER" id="PTHR11469">
    <property type="entry name" value="GLUCOSE-6-PHOSPHATE ISOMERASE"/>
    <property type="match status" value="1"/>
</dbReference>
<dbReference type="PANTHER" id="PTHR11469:SF1">
    <property type="entry name" value="GLUCOSE-6-PHOSPHATE ISOMERASE"/>
    <property type="match status" value="1"/>
</dbReference>
<dbReference type="Pfam" id="PF00342">
    <property type="entry name" value="PGI"/>
    <property type="match status" value="1"/>
</dbReference>
<dbReference type="PRINTS" id="PR00662">
    <property type="entry name" value="G6PISOMERASE"/>
</dbReference>
<dbReference type="SUPFAM" id="SSF53697">
    <property type="entry name" value="SIS domain"/>
    <property type="match status" value="1"/>
</dbReference>
<dbReference type="PROSITE" id="PS00765">
    <property type="entry name" value="P_GLUCOSE_ISOMERASE_1"/>
    <property type="match status" value="1"/>
</dbReference>
<dbReference type="PROSITE" id="PS00174">
    <property type="entry name" value="P_GLUCOSE_ISOMERASE_2"/>
    <property type="match status" value="1"/>
</dbReference>
<dbReference type="PROSITE" id="PS51463">
    <property type="entry name" value="P_GLUCOSE_ISOMERASE_3"/>
    <property type="match status" value="1"/>
</dbReference>
<name>G6PI_CANAL</name>
<comment type="function">
    <text evidence="1">In the cytoplasm, catalyzes the conversion of glucose-6-phosphate to fructose-6-phosphate, the second step in glycolysis, and the reverse reaction during gluconeogenesis.</text>
</comment>
<comment type="catalytic activity">
    <reaction evidence="1">
        <text>alpha-D-glucose 6-phosphate = beta-D-fructose 6-phosphate</text>
        <dbReference type="Rhea" id="RHEA:11816"/>
        <dbReference type="ChEBI" id="CHEBI:57634"/>
        <dbReference type="ChEBI" id="CHEBI:58225"/>
        <dbReference type="EC" id="5.3.1.9"/>
    </reaction>
</comment>
<comment type="pathway">
    <text evidence="4">Carbohydrate degradation; glycolysis; D-glyceraldehyde 3-phosphate and glycerone phosphate from D-glucose: step 2/4.</text>
</comment>
<comment type="subunit">
    <text evidence="1">Homodimer.</text>
</comment>
<comment type="subcellular location">
    <subcellularLocation>
        <location evidence="3">Cytoplasm</location>
    </subcellularLocation>
</comment>
<comment type="miscellaneous">
    <text>Has antigenic properties. Elicits a specific immune response in systemic candidiasis human patients undergoing malignant hematological disorders.</text>
</comment>
<comment type="similarity">
    <text evidence="4">Belongs to the GPI family.</text>
</comment>
<accession>P83780</accession>
<accession>A0A1D8PT96</accession>
<accession>Q59V64</accession>
<reference key="1">
    <citation type="journal article" date="2004" name="Proc. Natl. Acad. Sci. U.S.A.">
        <title>The diploid genome sequence of Candida albicans.</title>
        <authorList>
            <person name="Jones T."/>
            <person name="Federspiel N.A."/>
            <person name="Chibana H."/>
            <person name="Dungan J."/>
            <person name="Kalman S."/>
            <person name="Magee B.B."/>
            <person name="Newport G."/>
            <person name="Thorstenson Y.R."/>
            <person name="Agabian N."/>
            <person name="Magee P.T."/>
            <person name="Davis R.W."/>
            <person name="Scherer S."/>
        </authorList>
    </citation>
    <scope>NUCLEOTIDE SEQUENCE [LARGE SCALE GENOMIC DNA]</scope>
    <source>
        <strain>SC5314 / ATCC MYA-2876</strain>
    </source>
</reference>
<reference key="2">
    <citation type="journal article" date="2007" name="Genome Biol.">
        <title>Assembly of the Candida albicans genome into sixteen supercontigs aligned on the eight chromosomes.</title>
        <authorList>
            <person name="van het Hoog M."/>
            <person name="Rast T.J."/>
            <person name="Martchenko M."/>
            <person name="Grindle S."/>
            <person name="Dignard D."/>
            <person name="Hogues H."/>
            <person name="Cuomo C."/>
            <person name="Berriman M."/>
            <person name="Scherer S."/>
            <person name="Magee B.B."/>
            <person name="Whiteway M."/>
            <person name="Chibana H."/>
            <person name="Nantel A."/>
            <person name="Magee P.T."/>
        </authorList>
    </citation>
    <scope>GENOME REANNOTATION</scope>
    <source>
        <strain>SC5314 / ATCC MYA-2876</strain>
    </source>
</reference>
<reference key="3">
    <citation type="journal article" date="2013" name="Genome Biol.">
        <title>Assembly of a phased diploid Candida albicans genome facilitates allele-specific measurements and provides a simple model for repeat and indel structure.</title>
        <authorList>
            <person name="Muzzey D."/>
            <person name="Schwartz K."/>
            <person name="Weissman J.S."/>
            <person name="Sherlock G."/>
        </authorList>
    </citation>
    <scope>NUCLEOTIDE SEQUENCE [LARGE SCALE GENOMIC DNA]</scope>
    <scope>GENOME REANNOTATION</scope>
    <source>
        <strain>SC5314 / ATCC MYA-2876</strain>
    </source>
</reference>
<reference key="4">
    <citation type="journal article" date="2004" name="Proteomics">
        <title>Proteomics-based identification of novel Candida albicans antigens for diagnosis of systemic candidiasis in patients with underlying hematological malignancies.</title>
        <authorList>
            <person name="Pitarch A."/>
            <person name="Abian J."/>
            <person name="Carrascal M."/>
            <person name="Sanchez M."/>
            <person name="Nombela C."/>
            <person name="Gil C."/>
        </authorList>
    </citation>
    <scope>PROTEIN SEQUENCE OF 89-100 AND 121-131</scope>
    <scope>SUBCELLULAR LOCATION</scope>
    <scope>ANTIGENICITY</scope>
    <source>
        <strain>SC5314 / ATCC MYA-2876</strain>
        <tissue>Protoplast</tissue>
    </source>
</reference>
<evidence type="ECO:0000250" key="1">
    <source>
        <dbReference type="UniProtKB" id="P06744"/>
    </source>
</evidence>
<evidence type="ECO:0000250" key="2">
    <source>
        <dbReference type="UniProtKB" id="P06745"/>
    </source>
</evidence>
<evidence type="ECO:0000269" key="3">
    <source>
    </source>
</evidence>
<evidence type="ECO:0000305" key="4"/>
<sequence length="550" mass="61186">MASFKLATDLPEWKKLEETYKSVGEKFSVRDAFAKDPKRFEEFSWIYKNYDDSKILFDFSKNLVNKEILDQLVTLAKEAGVEKLRDAMFAGDHINTTEDRAVYHVALRNRALRKMPVDGKDTAQEVDDVLKHMKEFSDSIRDGSWTGYTGKSITDVVNIGIGGSDLGPVMVTEALKAYSKPGLNVHFISNIDGTHTAETLKNLNPETTLFLIASKTFTTAETITNATSAKNWFLATAKDSKHIAKHFAALSTNEKEVVAFGIDAKNMFGFESWVGGRYSVWSAIGLSVAIYIGFENFNDFLKGAEAMDQHFLTTPLENNIPVIGGLLSVWYNNFFGAQTHLVVPFDQYLHRFPAYLQQLSMESNGKSVTRANVFTNYQTGTILFGEPATNAQHSFFQLVHQGTKLIPADFILAAQSHNPIEKNLHQRMLASNFFAQSEALMVGKDEAKVKAEGATGGLVPHKEFSGNRPTTSILAQKITPATLGSLIAYYEHLTFTEGAIWNINSFDQWGVELGKVLAKVIGKELDDKKAVATHDASTNGLINQFKEWEE</sequence>
<protein>
    <recommendedName>
        <fullName>Glucose-6-phosphate isomerase</fullName>
        <shortName>GPI</shortName>
        <ecNumber evidence="1">5.3.1.9</ecNumber>
    </recommendedName>
    <alternativeName>
        <fullName>Phosphoglucose isomerase</fullName>
        <shortName>PGI</shortName>
    </alternativeName>
    <alternativeName>
        <fullName>Phosphohexose isomerase</fullName>
        <shortName>PHI</shortName>
    </alternativeName>
</protein>